<organism>
    <name type="scientific">Dictyostelium discoideum</name>
    <name type="common">Social amoeba</name>
    <dbReference type="NCBI Taxonomy" id="44689"/>
    <lineage>
        <taxon>Eukaryota</taxon>
        <taxon>Amoebozoa</taxon>
        <taxon>Evosea</taxon>
        <taxon>Eumycetozoa</taxon>
        <taxon>Dictyostelia</taxon>
        <taxon>Dictyosteliales</taxon>
        <taxon>Dictyosteliaceae</taxon>
        <taxon>Dictyostelium</taxon>
    </lineage>
</organism>
<sequence>MLRGNNIKKVNSLLVRSFHSTVGNRSGGPSTPINYPSLEIENAGEKQKMNLFQAINNGMDIAMQKDSKAVVFGEDVGFGGVFRCTVGLRDKYGASRVFNTPLCEQGIAGFAIGLAAQGATPIAEIQFADYIFPAFDQIVNEAAKYRYRSGGQFDCGSLTIRSPYGAVGHGGHYHSQSPESYFGHTPGLKVVIPSTPIEAKGLLLASIREKDPVIFFEPKLMYRSAVEEVPIGDYEIPLGKARIVKEGKDITIIGWGAQMRVLLQAVNMAEEKLGISCELIDLRTIQPWDVETVVESVKKTGRVVISHEAPKTGGWAAEISATIQERCFLHLEAPIQRVCGYDTPFPLIFEKFYVPDHLKNFESIKKTMVY</sequence>
<name>ODBB_DICDI</name>
<comment type="function">
    <text evidence="1">The branched-chain alpha-keto dehydrogenase complex catalyzes the overall conversion of alpha-keto acids to acyl-CoA and CO(2). It contains multiple copies of three enzymatic components: branched-chain alpha-keto acid decarboxylase (E1), lipoamide acyltransferase (E2) and lipoamide dehydrogenase (E3) (By similarity).</text>
</comment>
<comment type="catalytic activity">
    <reaction evidence="1">
        <text>N(6)-[(R)-lipoyl]-L-lysyl-[protein] + 3-methyl-2-oxobutanoate + H(+) = N(6)-[(R)-S(8)-2-methylpropanoyldihydrolipoyl]-L-lysyl-[protein] + CO2</text>
        <dbReference type="Rhea" id="RHEA:13457"/>
        <dbReference type="Rhea" id="RHEA-COMP:10474"/>
        <dbReference type="Rhea" id="RHEA-COMP:10497"/>
        <dbReference type="ChEBI" id="CHEBI:11851"/>
        <dbReference type="ChEBI" id="CHEBI:15378"/>
        <dbReference type="ChEBI" id="CHEBI:16526"/>
        <dbReference type="ChEBI" id="CHEBI:83099"/>
        <dbReference type="ChEBI" id="CHEBI:83142"/>
        <dbReference type="EC" id="1.2.4.4"/>
    </reaction>
    <physiologicalReaction direction="left-to-right" evidence="1">
        <dbReference type="Rhea" id="RHEA:13458"/>
    </physiologicalReaction>
</comment>
<comment type="cofactor">
    <cofactor evidence="1">
        <name>thiamine diphosphate</name>
        <dbReference type="ChEBI" id="CHEBI:58937"/>
    </cofactor>
</comment>
<comment type="subunit">
    <text evidence="1">Heterotetramer of 2 alpha and 2 beta chains.</text>
</comment>
<comment type="subcellular location">
    <subcellularLocation>
        <location evidence="1">Mitochondrion matrix</location>
    </subcellularLocation>
</comment>
<reference key="1">
    <citation type="journal article" date="2005" name="Nature">
        <title>The genome of the social amoeba Dictyostelium discoideum.</title>
        <authorList>
            <person name="Eichinger L."/>
            <person name="Pachebat J.A."/>
            <person name="Gloeckner G."/>
            <person name="Rajandream M.A."/>
            <person name="Sucgang R."/>
            <person name="Berriman M."/>
            <person name="Song J."/>
            <person name="Olsen R."/>
            <person name="Szafranski K."/>
            <person name="Xu Q."/>
            <person name="Tunggal B."/>
            <person name="Kummerfeld S."/>
            <person name="Madera M."/>
            <person name="Konfortov B.A."/>
            <person name="Rivero F."/>
            <person name="Bankier A.T."/>
            <person name="Lehmann R."/>
            <person name="Hamlin N."/>
            <person name="Davies R."/>
            <person name="Gaudet P."/>
            <person name="Fey P."/>
            <person name="Pilcher K."/>
            <person name="Chen G."/>
            <person name="Saunders D."/>
            <person name="Sodergren E.J."/>
            <person name="Davis P."/>
            <person name="Kerhornou A."/>
            <person name="Nie X."/>
            <person name="Hall N."/>
            <person name="Anjard C."/>
            <person name="Hemphill L."/>
            <person name="Bason N."/>
            <person name="Farbrother P."/>
            <person name="Desany B."/>
            <person name="Just E."/>
            <person name="Morio T."/>
            <person name="Rost R."/>
            <person name="Churcher C.M."/>
            <person name="Cooper J."/>
            <person name="Haydock S."/>
            <person name="van Driessche N."/>
            <person name="Cronin A."/>
            <person name="Goodhead I."/>
            <person name="Muzny D.M."/>
            <person name="Mourier T."/>
            <person name="Pain A."/>
            <person name="Lu M."/>
            <person name="Harper D."/>
            <person name="Lindsay R."/>
            <person name="Hauser H."/>
            <person name="James K.D."/>
            <person name="Quiles M."/>
            <person name="Madan Babu M."/>
            <person name="Saito T."/>
            <person name="Buchrieser C."/>
            <person name="Wardroper A."/>
            <person name="Felder M."/>
            <person name="Thangavelu M."/>
            <person name="Johnson D."/>
            <person name="Knights A."/>
            <person name="Loulseged H."/>
            <person name="Mungall K.L."/>
            <person name="Oliver K."/>
            <person name="Price C."/>
            <person name="Quail M.A."/>
            <person name="Urushihara H."/>
            <person name="Hernandez J."/>
            <person name="Rabbinowitsch E."/>
            <person name="Steffen D."/>
            <person name="Sanders M."/>
            <person name="Ma J."/>
            <person name="Kohara Y."/>
            <person name="Sharp S."/>
            <person name="Simmonds M.N."/>
            <person name="Spiegler S."/>
            <person name="Tivey A."/>
            <person name="Sugano S."/>
            <person name="White B."/>
            <person name="Walker D."/>
            <person name="Woodward J.R."/>
            <person name="Winckler T."/>
            <person name="Tanaka Y."/>
            <person name="Shaulsky G."/>
            <person name="Schleicher M."/>
            <person name="Weinstock G.M."/>
            <person name="Rosenthal A."/>
            <person name="Cox E.C."/>
            <person name="Chisholm R.L."/>
            <person name="Gibbs R.A."/>
            <person name="Loomis W.F."/>
            <person name="Platzer M."/>
            <person name="Kay R.R."/>
            <person name="Williams J.G."/>
            <person name="Dear P.H."/>
            <person name="Noegel A.A."/>
            <person name="Barrell B.G."/>
            <person name="Kuspa A."/>
        </authorList>
    </citation>
    <scope>NUCLEOTIDE SEQUENCE [LARGE SCALE GENOMIC DNA]</scope>
    <source>
        <strain>AX4</strain>
    </source>
</reference>
<dbReference type="EC" id="1.2.4.4" evidence="1"/>
<dbReference type="EMBL" id="AAFI02000003">
    <property type="protein sequence ID" value="EAL73463.1"/>
    <property type="molecule type" value="Genomic_DNA"/>
</dbReference>
<dbReference type="RefSeq" id="XP_647496.1">
    <property type="nucleotide sequence ID" value="XM_642404.1"/>
</dbReference>
<dbReference type="SMR" id="Q55FN7"/>
<dbReference type="FunCoup" id="Q55FN7">
    <property type="interactions" value="149"/>
</dbReference>
<dbReference type="STRING" id="44689.Q55FN7"/>
<dbReference type="PaxDb" id="44689-DDB0230185"/>
<dbReference type="EnsemblProtists" id="EAL73463">
    <property type="protein sequence ID" value="EAL73463"/>
    <property type="gene ID" value="DDB_G0268020"/>
</dbReference>
<dbReference type="GeneID" id="8616303"/>
<dbReference type="KEGG" id="ddi:DDB_G0268020"/>
<dbReference type="dictyBase" id="DDB_G0268020">
    <property type="gene designation" value="bkdB"/>
</dbReference>
<dbReference type="VEuPathDB" id="AmoebaDB:DDB_G0268020"/>
<dbReference type="eggNOG" id="KOG0525">
    <property type="taxonomic scope" value="Eukaryota"/>
</dbReference>
<dbReference type="HOGENOM" id="CLU_012907_1_0_1"/>
<dbReference type="InParanoid" id="Q55FN7"/>
<dbReference type="OMA" id="SEAYYMA"/>
<dbReference type="PhylomeDB" id="Q55FN7"/>
<dbReference type="Reactome" id="R-DDI-9859138">
    <property type="pathway name" value="BCKDH synthesizes BCAA-CoA from KIC, KMVA, KIV"/>
</dbReference>
<dbReference type="PRO" id="PR:Q55FN7"/>
<dbReference type="Proteomes" id="UP000002195">
    <property type="component" value="Chromosome 1"/>
</dbReference>
<dbReference type="GO" id="GO:0160157">
    <property type="term" value="C:branched-chain alpha-ketoacid dehydrogenase complex"/>
    <property type="evidence" value="ECO:0000250"/>
    <property type="project" value="UniProtKB"/>
</dbReference>
<dbReference type="GO" id="GO:0005759">
    <property type="term" value="C:mitochondrial matrix"/>
    <property type="evidence" value="ECO:0007669"/>
    <property type="project" value="UniProtKB-SubCell"/>
</dbReference>
<dbReference type="GO" id="GO:0003863">
    <property type="term" value="F:3-methyl-2-oxobutanoate dehydrogenase (2-methylpropanoyl-transferring) activity"/>
    <property type="evidence" value="ECO:0007669"/>
    <property type="project" value="UniProtKB-EC"/>
</dbReference>
<dbReference type="GO" id="GO:0046872">
    <property type="term" value="F:metal ion binding"/>
    <property type="evidence" value="ECO:0007669"/>
    <property type="project" value="UniProtKB-KW"/>
</dbReference>
<dbReference type="GO" id="GO:0009083">
    <property type="term" value="P:branched-chain amino acid catabolic process"/>
    <property type="evidence" value="ECO:0000250"/>
    <property type="project" value="UniProtKB"/>
</dbReference>
<dbReference type="GO" id="GO:0007584">
    <property type="term" value="P:response to nutrient"/>
    <property type="evidence" value="ECO:0000318"/>
    <property type="project" value="GO_Central"/>
</dbReference>
<dbReference type="CDD" id="cd07036">
    <property type="entry name" value="TPP_PYR_E1-PDHc-beta_like"/>
    <property type="match status" value="1"/>
</dbReference>
<dbReference type="FunFam" id="3.40.50.920:FF:000004">
    <property type="entry name" value="2-oxoisovalerate dehydrogenase subunit beta 1, mitochondrial"/>
    <property type="match status" value="1"/>
</dbReference>
<dbReference type="FunFam" id="3.40.50.970:FF:000001">
    <property type="entry name" value="Pyruvate dehydrogenase E1 beta subunit"/>
    <property type="match status" value="1"/>
</dbReference>
<dbReference type="Gene3D" id="3.40.50.920">
    <property type="match status" value="1"/>
</dbReference>
<dbReference type="Gene3D" id="3.40.50.970">
    <property type="match status" value="1"/>
</dbReference>
<dbReference type="InterPro" id="IPR029061">
    <property type="entry name" value="THDP-binding"/>
</dbReference>
<dbReference type="InterPro" id="IPR009014">
    <property type="entry name" value="Transketo_C/PFOR_II"/>
</dbReference>
<dbReference type="InterPro" id="IPR005475">
    <property type="entry name" value="Transketolase-like_Pyr-bd"/>
</dbReference>
<dbReference type="InterPro" id="IPR033248">
    <property type="entry name" value="Transketolase_C"/>
</dbReference>
<dbReference type="PANTHER" id="PTHR42980:SF1">
    <property type="entry name" value="2-OXOISOVALERATE DEHYDROGENASE SUBUNIT BETA, MITOCHONDRIAL"/>
    <property type="match status" value="1"/>
</dbReference>
<dbReference type="PANTHER" id="PTHR42980">
    <property type="entry name" value="2-OXOISOVALERATE DEHYDROGENASE SUBUNIT BETA-RELATED"/>
    <property type="match status" value="1"/>
</dbReference>
<dbReference type="Pfam" id="PF02779">
    <property type="entry name" value="Transket_pyr"/>
    <property type="match status" value="1"/>
</dbReference>
<dbReference type="Pfam" id="PF02780">
    <property type="entry name" value="Transketolase_C"/>
    <property type="match status" value="1"/>
</dbReference>
<dbReference type="SMART" id="SM00861">
    <property type="entry name" value="Transket_pyr"/>
    <property type="match status" value="1"/>
</dbReference>
<dbReference type="SUPFAM" id="SSF52518">
    <property type="entry name" value="Thiamin diphosphate-binding fold (THDP-binding)"/>
    <property type="match status" value="1"/>
</dbReference>
<dbReference type="SUPFAM" id="SSF52922">
    <property type="entry name" value="TK C-terminal domain-like"/>
    <property type="match status" value="1"/>
</dbReference>
<evidence type="ECO:0000250" key="1">
    <source>
        <dbReference type="UniProtKB" id="P21953"/>
    </source>
</evidence>
<evidence type="ECO:0000255" key="2"/>
<feature type="transit peptide" description="Mitochondrion" evidence="2">
    <location>
        <begin position="1"/>
        <end position="25"/>
    </location>
</feature>
<feature type="chain" id="PRO_0000327589" description="2-oxoisovalerate dehydrogenase subunit beta, mitochondrial">
    <location>
        <begin position="26"/>
        <end position="370"/>
    </location>
</feature>
<feature type="binding site" evidence="1">
    <location>
        <position position="130"/>
    </location>
    <ligand>
        <name>thiamine diphosphate</name>
        <dbReference type="ChEBI" id="CHEBI:58937"/>
        <note>ligand shared with alpha subunit</note>
    </ligand>
</feature>
<feature type="binding site" evidence="1">
    <location>
        <position position="156"/>
    </location>
    <ligand>
        <name>K(+)</name>
        <dbReference type="ChEBI" id="CHEBI:29103"/>
        <note>structural</note>
    </ligand>
</feature>
<feature type="binding site" evidence="1">
    <location>
        <position position="158"/>
    </location>
    <ligand>
        <name>K(+)</name>
        <dbReference type="ChEBI" id="CHEBI:29103"/>
        <note>structural</note>
    </ligand>
</feature>
<feature type="binding site" evidence="1">
    <location>
        <position position="159"/>
    </location>
    <ligand>
        <name>K(+)</name>
        <dbReference type="ChEBI" id="CHEBI:29103"/>
        <note>structural</note>
    </ligand>
</feature>
<feature type="binding site" evidence="1">
    <location>
        <position position="209"/>
    </location>
    <ligand>
        <name>K(+)</name>
        <dbReference type="ChEBI" id="CHEBI:29103"/>
        <note>structural</note>
    </ligand>
</feature>
<keyword id="KW-0479">Metal-binding</keyword>
<keyword id="KW-0496">Mitochondrion</keyword>
<keyword id="KW-0560">Oxidoreductase</keyword>
<keyword id="KW-0630">Potassium</keyword>
<keyword id="KW-1185">Reference proteome</keyword>
<keyword id="KW-0809">Transit peptide</keyword>
<protein>
    <recommendedName>
        <fullName>2-oxoisovalerate dehydrogenase subunit beta, mitochondrial</fullName>
        <ecNumber evidence="1">1.2.4.4</ecNumber>
    </recommendedName>
    <alternativeName>
        <fullName>3-methyl-2-oxobutanoate dehydrogenase</fullName>
    </alternativeName>
    <alternativeName>
        <fullName>Branched-chain alpha-keto acid dehydrogenase E1 component beta chain</fullName>
        <shortName>BCKDE1B</shortName>
        <shortName>BCKDH E1-beta</shortName>
    </alternativeName>
</protein>
<accession>Q55FN7</accession>
<proteinExistence type="inferred from homology"/>
<gene>
    <name type="primary">bkdB</name>
    <name type="ORF">DDB_G0268020</name>
</gene>